<protein>
    <recommendedName>
        <fullName evidence="1">A-type ATP synthase subunit E</fullName>
    </recommendedName>
    <alternativeName>
        <fullName evidence="3">A1A0 ATPase subunit E</fullName>
    </alternativeName>
</protein>
<proteinExistence type="evidence at protein level"/>
<dbReference type="EMBL" id="U47274">
    <property type="protein sequence ID" value="AAC06372.1"/>
    <property type="molecule type" value="Genomic_DNA"/>
</dbReference>
<dbReference type="EMBL" id="AE008384">
    <property type="protein sequence ID" value="AAM30479.1"/>
    <property type="molecule type" value="Genomic_DNA"/>
</dbReference>
<dbReference type="PIR" id="T45104">
    <property type="entry name" value="T45104"/>
</dbReference>
<dbReference type="RefSeq" id="WP_011032733.1">
    <property type="nucleotide sequence ID" value="NC_003901.1"/>
</dbReference>
<dbReference type="SMR" id="Q60183"/>
<dbReference type="TCDB" id="3.A.2.3.1">
    <property type="family name" value="the h+- or na+-translocating f-type, v-type and a-type atpase (f-atpase) superfamily"/>
</dbReference>
<dbReference type="KEGG" id="mma:MM_0783"/>
<dbReference type="PATRIC" id="fig|192952.21.peg.931"/>
<dbReference type="eggNOG" id="arCOG00869">
    <property type="taxonomic scope" value="Archaea"/>
</dbReference>
<dbReference type="HOGENOM" id="CLU_120786_0_0_2"/>
<dbReference type="Proteomes" id="UP000000595">
    <property type="component" value="Chromosome"/>
</dbReference>
<dbReference type="GO" id="GO:0005886">
    <property type="term" value="C:plasma membrane"/>
    <property type="evidence" value="ECO:0007669"/>
    <property type="project" value="UniProtKB-SubCell"/>
</dbReference>
<dbReference type="GO" id="GO:0033178">
    <property type="term" value="C:proton-transporting two-sector ATPase complex, catalytic domain"/>
    <property type="evidence" value="ECO:0007669"/>
    <property type="project" value="InterPro"/>
</dbReference>
<dbReference type="GO" id="GO:0005524">
    <property type="term" value="F:ATP binding"/>
    <property type="evidence" value="ECO:0007669"/>
    <property type="project" value="UniProtKB-UniRule"/>
</dbReference>
<dbReference type="GO" id="GO:0046933">
    <property type="term" value="F:proton-transporting ATP synthase activity, rotational mechanism"/>
    <property type="evidence" value="ECO:0007669"/>
    <property type="project" value="UniProtKB-UniRule"/>
</dbReference>
<dbReference type="GO" id="GO:0046961">
    <property type="term" value="F:proton-transporting ATPase activity, rotational mechanism"/>
    <property type="evidence" value="ECO:0007669"/>
    <property type="project" value="InterPro"/>
</dbReference>
<dbReference type="GO" id="GO:0042777">
    <property type="term" value="P:proton motive force-driven plasma membrane ATP synthesis"/>
    <property type="evidence" value="ECO:0007669"/>
    <property type="project" value="UniProtKB-UniRule"/>
</dbReference>
<dbReference type="Gene3D" id="1.20.5.620">
    <property type="entry name" value="F1F0 ATP synthase subunit B, membrane domain"/>
    <property type="match status" value="1"/>
</dbReference>
<dbReference type="HAMAP" id="MF_00311">
    <property type="entry name" value="ATP_synth_E_arch"/>
    <property type="match status" value="1"/>
</dbReference>
<dbReference type="InterPro" id="IPR002842">
    <property type="entry name" value="ATPase_V1_Esu"/>
</dbReference>
<dbReference type="NCBIfam" id="NF002629">
    <property type="entry name" value="PRK02292.1"/>
    <property type="match status" value="1"/>
</dbReference>
<dbReference type="Pfam" id="PF01991">
    <property type="entry name" value="vATP-synt_E"/>
    <property type="match status" value="1"/>
</dbReference>
<dbReference type="SUPFAM" id="SSF160527">
    <property type="entry name" value="V-type ATPase subunit E-like"/>
    <property type="match status" value="1"/>
</dbReference>
<evidence type="ECO:0000255" key="1">
    <source>
        <dbReference type="HAMAP-Rule" id="MF_00311"/>
    </source>
</evidence>
<evidence type="ECO:0000269" key="2">
    <source>
    </source>
</evidence>
<evidence type="ECO:0000303" key="3">
    <source>
    </source>
</evidence>
<evidence type="ECO:0000305" key="4"/>
<evidence type="ECO:0000305" key="5">
    <source>
    </source>
</evidence>
<accession>Q60183</accession>
<comment type="function">
    <text evidence="1 5">Component of the A-type ATP synthase that produces ATP from ADP in the presence of a proton gradient across the membrane.</text>
</comment>
<comment type="biophysicochemical properties">
    <phDependence>
        <text evidence="2">Optimum pH is 5.2 for ATP hydrolysis.</text>
    </phDependence>
</comment>
<comment type="subunit">
    <text evidence="2">Has multiple subunits, A(3), B(3), C, D, E, F, G, I and K(x); there may be a few other subunits as well.</text>
</comment>
<comment type="subcellular location">
    <subcellularLocation>
        <location evidence="1 2">Cell membrane</location>
        <topology evidence="1 5">Peripheral membrane protein</topology>
    </subcellularLocation>
</comment>
<comment type="miscellaneous">
    <text evidence="5">This organism has both a Na(+)-translocating F1F0 ATP synthase and this H(+)-translocating A1A0 ATP synthase.</text>
</comment>
<comment type="similarity">
    <text evidence="1">Belongs to the V-ATPase E subunit family.</text>
</comment>
<gene>
    <name evidence="1" type="primary">atpE</name>
    <name evidence="3" type="synonym">ahaE</name>
    <name type="ordered locus">MM_0783</name>
</gene>
<organism>
    <name type="scientific">Methanosarcina mazei (strain ATCC BAA-159 / DSM 3647 / Goe1 / Go1 / JCM 11833 / OCM 88)</name>
    <name type="common">Methanosarcina frisia</name>
    <dbReference type="NCBI Taxonomy" id="192952"/>
    <lineage>
        <taxon>Archaea</taxon>
        <taxon>Methanobacteriati</taxon>
        <taxon>Methanobacteriota</taxon>
        <taxon>Stenosarchaea group</taxon>
        <taxon>Methanomicrobia</taxon>
        <taxon>Methanosarcinales</taxon>
        <taxon>Methanosarcinaceae</taxon>
        <taxon>Methanosarcina</taxon>
    </lineage>
</organism>
<keyword id="KW-0066">ATP synthesis</keyword>
<keyword id="KW-1003">Cell membrane</keyword>
<keyword id="KW-0375">Hydrogen ion transport</keyword>
<keyword id="KW-0406">Ion transport</keyword>
<keyword id="KW-0472">Membrane</keyword>
<keyword id="KW-0813">Transport</keyword>
<name>AATE_METMA</name>
<reference key="1">
    <citation type="journal article" date="1996" name="J. Biol. Chem.">
        <title>Subunit structure and organization of the genes of the A1A0 ATPase from the Archaeon Methanosarcina mazei Go1.</title>
        <authorList>
            <person name="Wilms R."/>
            <person name="Freiberg C."/>
            <person name="Wegerle E."/>
            <person name="Meier I."/>
            <person name="Mayer F."/>
            <person name="Mueller V."/>
        </authorList>
    </citation>
    <scope>NUCLEOTIDE SEQUENCE [GENOMIC DNA]</scope>
    <scope>FUNCTION</scope>
    <scope>BIOPHYSICOCHEMICAL PROPERTIES</scope>
    <scope>SUBUNIT</scope>
    <scope>SUBCELLULAR LOCATION</scope>
    <source>
        <strain>ATCC BAA-159 / DSM 3647 / Goe1 / Go1 / JCM 11833 / OCM 88</strain>
    </source>
</reference>
<reference key="2">
    <citation type="journal article" date="2002" name="J. Mol. Microbiol. Biotechnol.">
        <title>The genome of Methanosarcina mazei: evidence for lateral gene transfer between Bacteria and Archaea.</title>
        <authorList>
            <person name="Deppenmeier U."/>
            <person name="Johann A."/>
            <person name="Hartsch T."/>
            <person name="Merkl R."/>
            <person name="Schmitz R.A."/>
            <person name="Martinez-Arias R."/>
            <person name="Henne A."/>
            <person name="Wiezer A."/>
            <person name="Baeumer S."/>
            <person name="Jacobi C."/>
            <person name="Brueggemann H."/>
            <person name="Lienard T."/>
            <person name="Christmann A."/>
            <person name="Boemecke M."/>
            <person name="Steckel S."/>
            <person name="Bhattacharyya A."/>
            <person name="Lykidis A."/>
            <person name="Overbeek R."/>
            <person name="Klenk H.-P."/>
            <person name="Gunsalus R.P."/>
            <person name="Fritz H.-J."/>
            <person name="Gottschalk G."/>
        </authorList>
    </citation>
    <scope>NUCLEOTIDE SEQUENCE [LARGE SCALE GENOMIC DNA]</scope>
    <source>
        <strain>ATCC BAA-159 / DSM 3647 / Goe1 / Go1 / JCM 11833 / OCM 88</strain>
    </source>
</reference>
<sequence>MGLEIVVKDIQEGARAEVSRIKAEGDAKASEIINEAKEIQKKTLGDSLAKAEEDLQSLHQQVISSANLEVKRITLNKRKELLDTVYNQTVENIKSMPASKKEELLKSILDKHEASGARAYSSKESEELVKKLTSLSYAGNIDSIGGIVLENEDRTVRLDFTYDSILKSVYERSLKQISDILYG</sequence>
<feature type="chain" id="PRO_0000117318" description="A-type ATP synthase subunit E">
    <location>
        <begin position="1"/>
        <end position="183"/>
    </location>
</feature>
<feature type="sequence conflict" description="In Ref. 1; AAC06372." evidence="4" ref="1">
    <original>L</original>
    <variation>H</variation>
    <location>
        <position position="3"/>
    </location>
</feature>
<feature type="sequence conflict" description="In Ref. 1; AAC06372." evidence="4" ref="1">
    <original>P</original>
    <variation>S</variation>
    <location>
        <position position="97"/>
    </location>
</feature>